<proteinExistence type="inferred from homology"/>
<feature type="chain" id="PRO_1000095763" description="Tryptophan synthase alpha chain">
    <location>
        <begin position="1"/>
        <end position="268"/>
    </location>
</feature>
<feature type="active site" description="Proton acceptor" evidence="1">
    <location>
        <position position="49"/>
    </location>
</feature>
<feature type="active site" description="Proton acceptor" evidence="1">
    <location>
        <position position="60"/>
    </location>
</feature>
<protein>
    <recommendedName>
        <fullName evidence="1">Tryptophan synthase alpha chain</fullName>
        <ecNumber evidence="1">4.2.1.20</ecNumber>
    </recommendedName>
</protein>
<comment type="function">
    <text evidence="1">The alpha subunit is responsible for the aldol cleavage of indoleglycerol phosphate to indole and glyceraldehyde 3-phosphate.</text>
</comment>
<comment type="catalytic activity">
    <reaction evidence="1">
        <text>(1S,2R)-1-C-(indol-3-yl)glycerol 3-phosphate + L-serine = D-glyceraldehyde 3-phosphate + L-tryptophan + H2O</text>
        <dbReference type="Rhea" id="RHEA:10532"/>
        <dbReference type="ChEBI" id="CHEBI:15377"/>
        <dbReference type="ChEBI" id="CHEBI:33384"/>
        <dbReference type="ChEBI" id="CHEBI:57912"/>
        <dbReference type="ChEBI" id="CHEBI:58866"/>
        <dbReference type="ChEBI" id="CHEBI:59776"/>
        <dbReference type="EC" id="4.2.1.20"/>
    </reaction>
</comment>
<comment type="pathway">
    <text evidence="1">Amino-acid biosynthesis; L-tryptophan biosynthesis; L-tryptophan from chorismate: step 5/5.</text>
</comment>
<comment type="subunit">
    <text evidence="1">Tetramer of two alpha and two beta chains.</text>
</comment>
<comment type="similarity">
    <text evidence="1">Belongs to the TrpA family.</text>
</comment>
<evidence type="ECO:0000255" key="1">
    <source>
        <dbReference type="HAMAP-Rule" id="MF_00131"/>
    </source>
</evidence>
<gene>
    <name evidence="1" type="primary">trpA</name>
    <name type="ordered locus">XfasM23_0645</name>
</gene>
<accession>B2I9J3</accession>
<keyword id="KW-0028">Amino-acid biosynthesis</keyword>
<keyword id="KW-0057">Aromatic amino acid biosynthesis</keyword>
<keyword id="KW-0456">Lyase</keyword>
<keyword id="KW-0822">Tryptophan biosynthesis</keyword>
<organism>
    <name type="scientific">Xylella fastidiosa (strain M23)</name>
    <dbReference type="NCBI Taxonomy" id="405441"/>
    <lineage>
        <taxon>Bacteria</taxon>
        <taxon>Pseudomonadati</taxon>
        <taxon>Pseudomonadota</taxon>
        <taxon>Gammaproteobacteria</taxon>
        <taxon>Lysobacterales</taxon>
        <taxon>Lysobacteraceae</taxon>
        <taxon>Xylella</taxon>
    </lineage>
</organism>
<name>TRPA_XYLF2</name>
<reference key="1">
    <citation type="journal article" date="2010" name="J. Bacteriol.">
        <title>Whole genome sequences of two Xylella fastidiosa strains (M12 and M23) causing almond leaf scorch disease in California.</title>
        <authorList>
            <person name="Chen J."/>
            <person name="Xie G."/>
            <person name="Han S."/>
            <person name="Chertkov O."/>
            <person name="Sims D."/>
            <person name="Civerolo E.L."/>
        </authorList>
    </citation>
    <scope>NUCLEOTIDE SEQUENCE [LARGE SCALE GENOMIC DNA]</scope>
    <source>
        <strain>M23</strain>
    </source>
</reference>
<sequence length="268" mass="28079">MHRIDETFRRLRAQSRKALIPFITAGDPSLEAAVPVMHALVRAGADVIELGVPFSDPMADGPVIQHSSERALQRGVGLAYVLQTVDVFRQSDAVTPVVLMGYLNPLEIYGIARFTQQALASGVDGVLLVDLPPEEADEIRAIFSAAGLALIVLASPTTSASRLATLSGVAQGYLYYVSFAGVTGADRLDAQSAGDRLRGLRAQTQVPVVVGFGIRDAASAVVMAVDADGVVVGSALVTALSDAPDVDTACRRADAFLAPLRQALDAVK</sequence>
<dbReference type="EC" id="4.2.1.20" evidence="1"/>
<dbReference type="EMBL" id="CP001011">
    <property type="protein sequence ID" value="ACB92087.1"/>
    <property type="molecule type" value="Genomic_DNA"/>
</dbReference>
<dbReference type="RefSeq" id="WP_004083823.1">
    <property type="nucleotide sequence ID" value="NC_010577.1"/>
</dbReference>
<dbReference type="SMR" id="B2I9J3"/>
<dbReference type="KEGG" id="xfn:XfasM23_0645"/>
<dbReference type="HOGENOM" id="CLU_016734_0_0_6"/>
<dbReference type="UniPathway" id="UPA00035">
    <property type="reaction ID" value="UER00044"/>
</dbReference>
<dbReference type="Proteomes" id="UP000001698">
    <property type="component" value="Chromosome"/>
</dbReference>
<dbReference type="GO" id="GO:0005829">
    <property type="term" value="C:cytosol"/>
    <property type="evidence" value="ECO:0007669"/>
    <property type="project" value="TreeGrafter"/>
</dbReference>
<dbReference type="GO" id="GO:0004834">
    <property type="term" value="F:tryptophan synthase activity"/>
    <property type="evidence" value="ECO:0007669"/>
    <property type="project" value="UniProtKB-UniRule"/>
</dbReference>
<dbReference type="CDD" id="cd04724">
    <property type="entry name" value="Tryptophan_synthase_alpha"/>
    <property type="match status" value="1"/>
</dbReference>
<dbReference type="FunFam" id="3.20.20.70:FF:000037">
    <property type="entry name" value="Tryptophan synthase alpha chain"/>
    <property type="match status" value="1"/>
</dbReference>
<dbReference type="Gene3D" id="3.20.20.70">
    <property type="entry name" value="Aldolase class I"/>
    <property type="match status" value="1"/>
</dbReference>
<dbReference type="HAMAP" id="MF_00131">
    <property type="entry name" value="Trp_synth_alpha"/>
    <property type="match status" value="1"/>
</dbReference>
<dbReference type="InterPro" id="IPR013785">
    <property type="entry name" value="Aldolase_TIM"/>
</dbReference>
<dbReference type="InterPro" id="IPR011060">
    <property type="entry name" value="RibuloseP-bd_barrel"/>
</dbReference>
<dbReference type="InterPro" id="IPR018204">
    <property type="entry name" value="Trp_synthase_alpha_AS"/>
</dbReference>
<dbReference type="InterPro" id="IPR002028">
    <property type="entry name" value="Trp_synthase_suA"/>
</dbReference>
<dbReference type="NCBIfam" id="TIGR00262">
    <property type="entry name" value="trpA"/>
    <property type="match status" value="1"/>
</dbReference>
<dbReference type="PANTHER" id="PTHR43406:SF1">
    <property type="entry name" value="TRYPTOPHAN SYNTHASE ALPHA CHAIN, CHLOROPLASTIC"/>
    <property type="match status" value="1"/>
</dbReference>
<dbReference type="PANTHER" id="PTHR43406">
    <property type="entry name" value="TRYPTOPHAN SYNTHASE, ALPHA CHAIN"/>
    <property type="match status" value="1"/>
</dbReference>
<dbReference type="Pfam" id="PF00290">
    <property type="entry name" value="Trp_syntA"/>
    <property type="match status" value="1"/>
</dbReference>
<dbReference type="SUPFAM" id="SSF51366">
    <property type="entry name" value="Ribulose-phoshate binding barrel"/>
    <property type="match status" value="1"/>
</dbReference>
<dbReference type="PROSITE" id="PS00167">
    <property type="entry name" value="TRP_SYNTHASE_ALPHA"/>
    <property type="match status" value="1"/>
</dbReference>